<dbReference type="EC" id="7.2.2.19" evidence="2"/>
<dbReference type="EMBL" id="M22724">
    <property type="protein sequence ID" value="AAA31003.1"/>
    <property type="molecule type" value="mRNA"/>
</dbReference>
<dbReference type="PIR" id="A31671">
    <property type="entry name" value="A31671"/>
</dbReference>
<dbReference type="RefSeq" id="NP_999456.1">
    <property type="nucleotide sequence ID" value="NM_214291.1"/>
</dbReference>
<dbReference type="PDB" id="1IWC">
    <property type="method" value="NMR"/>
    <property type="chains" value="A=1-34"/>
</dbReference>
<dbReference type="PDB" id="1IWF">
    <property type="method" value="NMR"/>
    <property type="chains" value="A=1-34"/>
</dbReference>
<dbReference type="PDB" id="2XZB">
    <property type="method" value="EM"/>
    <property type="resolution" value="7.00 A"/>
    <property type="chains" value="A=1-1034"/>
</dbReference>
<dbReference type="PDB" id="2YN9">
    <property type="method" value="EM"/>
    <property type="resolution" value="8.00 A"/>
    <property type="chains" value="A=1-1034"/>
</dbReference>
<dbReference type="PDB" id="3IXZ">
    <property type="method" value="EM"/>
    <property type="resolution" value="6.50 A"/>
    <property type="chains" value="A=1-1034"/>
</dbReference>
<dbReference type="PDB" id="4UX1">
    <property type="method" value="EM"/>
    <property type="resolution" value="8.00 A"/>
    <property type="chains" value="A=1-1034"/>
</dbReference>
<dbReference type="PDB" id="4UX2">
    <property type="method" value="EM"/>
    <property type="resolution" value="7.00 A"/>
    <property type="chains" value="A=1-1034"/>
</dbReference>
<dbReference type="PDB" id="5Y0B">
    <property type="method" value="EM"/>
    <property type="resolution" value="6.70 A"/>
    <property type="chains" value="A=1-1034"/>
</dbReference>
<dbReference type="PDB" id="5YLU">
    <property type="method" value="X-ray"/>
    <property type="resolution" value="2.80 A"/>
    <property type="chains" value="A=1-1034"/>
</dbReference>
<dbReference type="PDB" id="5YLV">
    <property type="method" value="X-ray"/>
    <property type="resolution" value="2.80 A"/>
    <property type="chains" value="A=1-1034"/>
</dbReference>
<dbReference type="PDB" id="6JXH">
    <property type="method" value="X-ray"/>
    <property type="resolution" value="2.50 A"/>
    <property type="chains" value="A=49-1034"/>
</dbReference>
<dbReference type="PDB" id="6JXI">
    <property type="method" value="X-ray"/>
    <property type="resolution" value="2.60 A"/>
    <property type="chains" value="A=49-1034"/>
</dbReference>
<dbReference type="PDB" id="6JXJ">
    <property type="method" value="X-ray"/>
    <property type="resolution" value="2.50 A"/>
    <property type="chains" value="A=49-1034"/>
</dbReference>
<dbReference type="PDB" id="6JXK">
    <property type="method" value="X-ray"/>
    <property type="resolution" value="4.30 A"/>
    <property type="chains" value="A/E=49-1034"/>
</dbReference>
<dbReference type="PDB" id="7EFL">
    <property type="method" value="X-ray"/>
    <property type="resolution" value="3.40 A"/>
    <property type="chains" value="A=49-1034"/>
</dbReference>
<dbReference type="PDB" id="7EFM">
    <property type="method" value="X-ray"/>
    <property type="resolution" value="3.20 A"/>
    <property type="chains" value="A=49-1034"/>
</dbReference>
<dbReference type="PDB" id="7EFN">
    <property type="method" value="X-ray"/>
    <property type="resolution" value="3.20 A"/>
    <property type="chains" value="A=50-1034"/>
</dbReference>
<dbReference type="PDB" id="7ET1">
    <property type="method" value="EM"/>
    <property type="resolution" value="2.60 A"/>
    <property type="chains" value="A=49-1034"/>
</dbReference>
<dbReference type="PDB" id="7W47">
    <property type="method" value="X-ray"/>
    <property type="resolution" value="3.00 A"/>
    <property type="chains" value="A=1-1034"/>
</dbReference>
<dbReference type="PDB" id="7W48">
    <property type="method" value="X-ray"/>
    <property type="resolution" value="3.50 A"/>
    <property type="chains" value="A=1-1034"/>
</dbReference>
<dbReference type="PDB" id="7W49">
    <property type="method" value="X-ray"/>
    <property type="resolution" value="3.10 A"/>
    <property type="chains" value="A=1-1034"/>
</dbReference>
<dbReference type="PDB" id="7W4A">
    <property type="method" value="EM"/>
    <property type="resolution" value="2.76 A"/>
    <property type="chains" value="A=1-1034"/>
</dbReference>
<dbReference type="PDB" id="8IJV">
    <property type="method" value="EM"/>
    <property type="resolution" value="2.10 A"/>
    <property type="chains" value="A=2-1034"/>
</dbReference>
<dbReference type="PDB" id="8IJW">
    <property type="method" value="EM"/>
    <property type="resolution" value="2.19 A"/>
    <property type="chains" value="A=2-1034"/>
</dbReference>
<dbReference type="PDB" id="8IJX">
    <property type="method" value="EM"/>
    <property type="resolution" value="2.08 A"/>
    <property type="chains" value="A=2-1034"/>
</dbReference>
<dbReference type="PDB" id="8JMN">
    <property type="method" value="EM"/>
    <property type="resolution" value="2.26 A"/>
    <property type="chains" value="A=2-1034"/>
</dbReference>
<dbReference type="PDB" id="8WA5">
    <property type="method" value="EM"/>
    <property type="resolution" value="2.51 A"/>
    <property type="chains" value="A=2-1034"/>
</dbReference>
<dbReference type="PDBsum" id="1IWC"/>
<dbReference type="PDBsum" id="1IWF"/>
<dbReference type="PDBsum" id="2XZB"/>
<dbReference type="PDBsum" id="2YN9"/>
<dbReference type="PDBsum" id="3IXZ"/>
<dbReference type="PDBsum" id="4UX1"/>
<dbReference type="PDBsum" id="4UX2"/>
<dbReference type="PDBsum" id="5Y0B"/>
<dbReference type="PDBsum" id="5YLU"/>
<dbReference type="PDBsum" id="5YLV"/>
<dbReference type="PDBsum" id="6JXH"/>
<dbReference type="PDBsum" id="6JXI"/>
<dbReference type="PDBsum" id="6JXJ"/>
<dbReference type="PDBsum" id="6JXK"/>
<dbReference type="PDBsum" id="7EFL"/>
<dbReference type="PDBsum" id="7EFM"/>
<dbReference type="PDBsum" id="7EFN"/>
<dbReference type="PDBsum" id="7ET1"/>
<dbReference type="PDBsum" id="7W47"/>
<dbReference type="PDBsum" id="7W48"/>
<dbReference type="PDBsum" id="7W49"/>
<dbReference type="PDBsum" id="7W4A"/>
<dbReference type="PDBsum" id="8IJV"/>
<dbReference type="PDBsum" id="8IJW"/>
<dbReference type="PDBsum" id="8IJX"/>
<dbReference type="PDBsum" id="8JMN"/>
<dbReference type="PDBsum" id="8WA5"/>
<dbReference type="EMDB" id="EMD-1831"/>
<dbReference type="EMDB" id="EMD-2759"/>
<dbReference type="EMDB" id="EMD-2760"/>
<dbReference type="EMDB" id="EMD-32299"/>
<dbReference type="EMDB" id="EMD-6799"/>
<dbReference type="SMR" id="P19156"/>
<dbReference type="ComplexPortal" id="CPX-2195">
    <property type="entry name" value="Hydrogen:potassium-exchanging ATPase complex"/>
</dbReference>
<dbReference type="FunCoup" id="P19156">
    <property type="interactions" value="196"/>
</dbReference>
<dbReference type="IntAct" id="P19156">
    <property type="interactions" value="2"/>
</dbReference>
<dbReference type="MINT" id="P19156"/>
<dbReference type="STRING" id="9823.ENSSSCP00000069966"/>
<dbReference type="BindingDB" id="P19156"/>
<dbReference type="ChEMBL" id="CHEMBL3919"/>
<dbReference type="DrugCentral" id="P19156"/>
<dbReference type="iPTMnet" id="P19156"/>
<dbReference type="PaxDb" id="9823-ENSSSCP00000003126"/>
<dbReference type="PeptideAtlas" id="P19156"/>
<dbReference type="GeneID" id="397552"/>
<dbReference type="KEGG" id="ssc:397552"/>
<dbReference type="CTD" id="495"/>
<dbReference type="eggNOG" id="KOG0203">
    <property type="taxonomic scope" value="Eukaryota"/>
</dbReference>
<dbReference type="InParanoid" id="P19156"/>
<dbReference type="OrthoDB" id="158672at2759"/>
<dbReference type="BRENDA" id="7.2.2.19">
    <property type="organism ID" value="6170"/>
</dbReference>
<dbReference type="EvolutionaryTrace" id="P19156"/>
<dbReference type="PRO" id="PR:P19156"/>
<dbReference type="Proteomes" id="UP000008227">
    <property type="component" value="Unplaced"/>
</dbReference>
<dbReference type="Proteomes" id="UP000314985">
    <property type="component" value="Unplaced"/>
</dbReference>
<dbReference type="Proteomes" id="UP000694570">
    <property type="component" value="Unplaced"/>
</dbReference>
<dbReference type="Proteomes" id="UP000694571">
    <property type="component" value="Unplaced"/>
</dbReference>
<dbReference type="Proteomes" id="UP000694720">
    <property type="component" value="Unplaced"/>
</dbReference>
<dbReference type="Proteomes" id="UP000694722">
    <property type="component" value="Unplaced"/>
</dbReference>
<dbReference type="Proteomes" id="UP000694723">
    <property type="component" value="Unplaced"/>
</dbReference>
<dbReference type="Proteomes" id="UP000694724">
    <property type="component" value="Unplaced"/>
</dbReference>
<dbReference type="Proteomes" id="UP000694725">
    <property type="component" value="Unplaced"/>
</dbReference>
<dbReference type="Proteomes" id="UP000694726">
    <property type="component" value="Unplaced"/>
</dbReference>
<dbReference type="Proteomes" id="UP000694727">
    <property type="component" value="Unplaced"/>
</dbReference>
<dbReference type="Proteomes" id="UP000694728">
    <property type="component" value="Unplaced"/>
</dbReference>
<dbReference type="GO" id="GO:0016324">
    <property type="term" value="C:apical plasma membrane"/>
    <property type="evidence" value="ECO:0007669"/>
    <property type="project" value="UniProtKB-SubCell"/>
</dbReference>
<dbReference type="GO" id="GO:0005886">
    <property type="term" value="C:plasma membrane"/>
    <property type="evidence" value="ECO:0000318"/>
    <property type="project" value="GO_Central"/>
</dbReference>
<dbReference type="GO" id="GO:0005889">
    <property type="term" value="C:potassium:proton exchanging ATPase complex"/>
    <property type="evidence" value="ECO:0000353"/>
    <property type="project" value="ComplexPortal"/>
</dbReference>
<dbReference type="GO" id="GO:0005524">
    <property type="term" value="F:ATP binding"/>
    <property type="evidence" value="ECO:0007669"/>
    <property type="project" value="UniProtKB-KW"/>
</dbReference>
<dbReference type="GO" id="GO:0016887">
    <property type="term" value="F:ATP hydrolysis activity"/>
    <property type="evidence" value="ECO:0007669"/>
    <property type="project" value="InterPro"/>
</dbReference>
<dbReference type="GO" id="GO:0000287">
    <property type="term" value="F:magnesium ion binding"/>
    <property type="evidence" value="ECO:0000314"/>
    <property type="project" value="UniProtKB"/>
</dbReference>
<dbReference type="GO" id="GO:0008900">
    <property type="term" value="F:P-type potassium:proton transporter activity"/>
    <property type="evidence" value="ECO:0000318"/>
    <property type="project" value="GO_Central"/>
</dbReference>
<dbReference type="GO" id="GO:0005391">
    <property type="term" value="F:P-type sodium:potassium-exchanging transporter activity"/>
    <property type="evidence" value="ECO:0000318"/>
    <property type="project" value="GO_Central"/>
</dbReference>
<dbReference type="GO" id="GO:0030955">
    <property type="term" value="F:potassium ion binding"/>
    <property type="evidence" value="ECO:0000314"/>
    <property type="project" value="UniProtKB"/>
</dbReference>
<dbReference type="GO" id="GO:0030007">
    <property type="term" value="P:intracellular potassium ion homeostasis"/>
    <property type="evidence" value="ECO:0000318"/>
    <property type="project" value="GO_Central"/>
</dbReference>
<dbReference type="GO" id="GO:0006883">
    <property type="term" value="P:intracellular sodium ion homeostasis"/>
    <property type="evidence" value="ECO:0000318"/>
    <property type="project" value="GO_Central"/>
</dbReference>
<dbReference type="GO" id="GO:1990573">
    <property type="term" value="P:potassium ion import across plasma membrane"/>
    <property type="evidence" value="ECO:0000318"/>
    <property type="project" value="GO_Central"/>
</dbReference>
<dbReference type="GO" id="GO:0071805">
    <property type="term" value="P:potassium ion transmembrane transport"/>
    <property type="evidence" value="ECO:0000314"/>
    <property type="project" value="ComplexPortal"/>
</dbReference>
<dbReference type="GO" id="GO:1902600">
    <property type="term" value="P:proton transmembrane transport"/>
    <property type="evidence" value="ECO:0000318"/>
    <property type="project" value="GO_Central"/>
</dbReference>
<dbReference type="GO" id="GO:0036376">
    <property type="term" value="P:sodium ion export across plasma membrane"/>
    <property type="evidence" value="ECO:0000318"/>
    <property type="project" value="GO_Central"/>
</dbReference>
<dbReference type="CDD" id="cd02608">
    <property type="entry name" value="P-type_ATPase_Na-K_like"/>
    <property type="match status" value="1"/>
</dbReference>
<dbReference type="FunFam" id="3.40.50.1000:FF:000001">
    <property type="entry name" value="Phospholipid-transporting ATPase IC"/>
    <property type="match status" value="1"/>
</dbReference>
<dbReference type="FunFam" id="1.20.1110.10:FF:000079">
    <property type="entry name" value="Sodium/potassium-transporting ATPase subunit alpha"/>
    <property type="match status" value="1"/>
</dbReference>
<dbReference type="FunFam" id="2.70.150.10:FF:000003">
    <property type="entry name" value="Sodium/potassium-transporting ATPase subunit alpha"/>
    <property type="match status" value="1"/>
</dbReference>
<dbReference type="FunFam" id="3.40.1110.10:FF:000001">
    <property type="entry name" value="Sodium/potassium-transporting ATPase subunit alpha"/>
    <property type="match status" value="1"/>
</dbReference>
<dbReference type="FunFam" id="3.40.50.1000:FF:000004">
    <property type="entry name" value="Sodium/potassium-transporting ATPase subunit alpha"/>
    <property type="match status" value="1"/>
</dbReference>
<dbReference type="FunFam" id="1.20.1110.10:FF:000095">
    <property type="entry name" value="Sodium/potassium-transporting ATPase subunit alpha-1"/>
    <property type="match status" value="1"/>
</dbReference>
<dbReference type="Gene3D" id="3.40.1110.10">
    <property type="entry name" value="Calcium-transporting ATPase, cytoplasmic domain N"/>
    <property type="match status" value="1"/>
</dbReference>
<dbReference type="Gene3D" id="2.70.150.10">
    <property type="entry name" value="Calcium-transporting ATPase, cytoplasmic transduction domain A"/>
    <property type="match status" value="1"/>
</dbReference>
<dbReference type="Gene3D" id="1.20.1110.10">
    <property type="entry name" value="Calcium-transporting ATPase, transmembrane domain"/>
    <property type="match status" value="1"/>
</dbReference>
<dbReference type="Gene3D" id="3.40.50.1000">
    <property type="entry name" value="HAD superfamily/HAD-like"/>
    <property type="match status" value="1"/>
</dbReference>
<dbReference type="InterPro" id="IPR006068">
    <property type="entry name" value="ATPase_P-typ_cation-transptr_C"/>
</dbReference>
<dbReference type="InterPro" id="IPR004014">
    <property type="entry name" value="ATPase_P-typ_cation-transptr_N"/>
</dbReference>
<dbReference type="InterPro" id="IPR023299">
    <property type="entry name" value="ATPase_P-typ_cyto_dom_N"/>
</dbReference>
<dbReference type="InterPro" id="IPR015127">
    <property type="entry name" value="ATPase_P-typ_H/K-transp_N"/>
</dbReference>
<dbReference type="InterPro" id="IPR018303">
    <property type="entry name" value="ATPase_P-typ_P_site"/>
</dbReference>
<dbReference type="InterPro" id="IPR023298">
    <property type="entry name" value="ATPase_P-typ_TM_dom_sf"/>
</dbReference>
<dbReference type="InterPro" id="IPR008250">
    <property type="entry name" value="ATPase_P-typ_transduc_dom_A_sf"/>
</dbReference>
<dbReference type="InterPro" id="IPR050510">
    <property type="entry name" value="Cation_transp_ATPase_P-type"/>
</dbReference>
<dbReference type="InterPro" id="IPR036412">
    <property type="entry name" value="HAD-like_sf"/>
</dbReference>
<dbReference type="InterPro" id="IPR023214">
    <property type="entry name" value="HAD_sf"/>
</dbReference>
<dbReference type="InterPro" id="IPR005775">
    <property type="entry name" value="P-type_ATPase_IIC"/>
</dbReference>
<dbReference type="InterPro" id="IPR001757">
    <property type="entry name" value="P_typ_ATPase"/>
</dbReference>
<dbReference type="InterPro" id="IPR044492">
    <property type="entry name" value="P_typ_ATPase_HD_dom"/>
</dbReference>
<dbReference type="NCBIfam" id="TIGR01106">
    <property type="entry name" value="ATPase-IIC_X-K"/>
    <property type="match status" value="1"/>
</dbReference>
<dbReference type="NCBIfam" id="TIGR01494">
    <property type="entry name" value="ATPase_P-type"/>
    <property type="match status" value="2"/>
</dbReference>
<dbReference type="PANTHER" id="PTHR43294:SF10">
    <property type="entry name" value="POTASSIUM-TRANSPORTING ATPASE ALPHA CHAIN 1"/>
    <property type="match status" value="1"/>
</dbReference>
<dbReference type="PANTHER" id="PTHR43294">
    <property type="entry name" value="SODIUM/POTASSIUM-TRANSPORTING ATPASE SUBUNIT ALPHA"/>
    <property type="match status" value="1"/>
</dbReference>
<dbReference type="Pfam" id="PF13246">
    <property type="entry name" value="Cation_ATPase"/>
    <property type="match status" value="1"/>
</dbReference>
<dbReference type="Pfam" id="PF00689">
    <property type="entry name" value="Cation_ATPase_C"/>
    <property type="match status" value="1"/>
</dbReference>
<dbReference type="Pfam" id="PF00690">
    <property type="entry name" value="Cation_ATPase_N"/>
    <property type="match status" value="1"/>
</dbReference>
<dbReference type="Pfam" id="PF00122">
    <property type="entry name" value="E1-E2_ATPase"/>
    <property type="match status" value="1"/>
</dbReference>
<dbReference type="Pfam" id="PF09040">
    <property type="entry name" value="H-K_ATPase_N"/>
    <property type="match status" value="1"/>
</dbReference>
<dbReference type="Pfam" id="PF00702">
    <property type="entry name" value="Hydrolase"/>
    <property type="match status" value="1"/>
</dbReference>
<dbReference type="PRINTS" id="PR00119">
    <property type="entry name" value="CATATPASE"/>
</dbReference>
<dbReference type="PRINTS" id="PR00121">
    <property type="entry name" value="NAKATPASE"/>
</dbReference>
<dbReference type="SFLD" id="SFLDS00003">
    <property type="entry name" value="Haloacid_Dehalogenase"/>
    <property type="match status" value="1"/>
</dbReference>
<dbReference type="SFLD" id="SFLDF00027">
    <property type="entry name" value="p-type_atpase"/>
    <property type="match status" value="1"/>
</dbReference>
<dbReference type="SMART" id="SM00831">
    <property type="entry name" value="Cation_ATPase_N"/>
    <property type="match status" value="1"/>
</dbReference>
<dbReference type="SUPFAM" id="SSF81653">
    <property type="entry name" value="Calcium ATPase, transduction domain A"/>
    <property type="match status" value="1"/>
</dbReference>
<dbReference type="SUPFAM" id="SSF81665">
    <property type="entry name" value="Calcium ATPase, transmembrane domain M"/>
    <property type="match status" value="1"/>
</dbReference>
<dbReference type="SUPFAM" id="SSF56784">
    <property type="entry name" value="HAD-like"/>
    <property type="match status" value="1"/>
</dbReference>
<dbReference type="SUPFAM" id="SSF81660">
    <property type="entry name" value="Metal cation-transporting ATPase, ATP-binding domain N"/>
    <property type="match status" value="1"/>
</dbReference>
<dbReference type="PROSITE" id="PS00154">
    <property type="entry name" value="ATPASE_E1_E2"/>
    <property type="match status" value="1"/>
</dbReference>
<gene>
    <name type="primary">ATP4A</name>
</gene>
<organism>
    <name type="scientific">Sus scrofa</name>
    <name type="common">Pig</name>
    <dbReference type="NCBI Taxonomy" id="9823"/>
    <lineage>
        <taxon>Eukaryota</taxon>
        <taxon>Metazoa</taxon>
        <taxon>Chordata</taxon>
        <taxon>Craniata</taxon>
        <taxon>Vertebrata</taxon>
        <taxon>Euteleostomi</taxon>
        <taxon>Mammalia</taxon>
        <taxon>Eutheria</taxon>
        <taxon>Laurasiatheria</taxon>
        <taxon>Artiodactyla</taxon>
        <taxon>Suina</taxon>
        <taxon>Suidae</taxon>
        <taxon>Sus</taxon>
    </lineage>
</organism>
<name>ATP4A_PIG</name>
<evidence type="ECO:0000250" key="1"/>
<evidence type="ECO:0000250" key="2">
    <source>
        <dbReference type="UniProtKB" id="P09626"/>
    </source>
</evidence>
<evidence type="ECO:0000250" key="3">
    <source>
        <dbReference type="UniProtKB" id="P20648"/>
    </source>
</evidence>
<evidence type="ECO:0000250" key="4">
    <source>
        <dbReference type="UniProtKB" id="P50993"/>
    </source>
</evidence>
<evidence type="ECO:0000250" key="5">
    <source>
        <dbReference type="UniProtKB" id="Q64436"/>
    </source>
</evidence>
<evidence type="ECO:0000250" key="6">
    <source>
        <dbReference type="UniProtKB" id="Q6PIE5"/>
    </source>
</evidence>
<evidence type="ECO:0000255" key="7"/>
<evidence type="ECO:0000256" key="8">
    <source>
        <dbReference type="SAM" id="MobiDB-lite"/>
    </source>
</evidence>
<evidence type="ECO:0000269" key="9">
    <source>
    </source>
</evidence>
<evidence type="ECO:0000269" key="10">
    <source>
    </source>
</evidence>
<evidence type="ECO:0000269" key="11">
    <source>
    </source>
</evidence>
<evidence type="ECO:0000269" key="12">
    <source>
    </source>
</evidence>
<evidence type="ECO:0000269" key="13">
    <source>
    </source>
</evidence>
<evidence type="ECO:0000269" key="14">
    <source>
    </source>
</evidence>
<evidence type="ECO:0000269" key="15">
    <source>
    </source>
</evidence>
<evidence type="ECO:0000269" key="16">
    <source>
    </source>
</evidence>
<evidence type="ECO:0000269" key="17">
    <source>
    </source>
</evidence>
<evidence type="ECO:0000303" key="18">
    <source>
    </source>
</evidence>
<evidence type="ECO:0000303" key="19">
    <source>
    </source>
</evidence>
<evidence type="ECO:0000305" key="20"/>
<evidence type="ECO:0000305" key="21">
    <source>
    </source>
</evidence>
<evidence type="ECO:0000305" key="22">
    <source>
    </source>
</evidence>
<evidence type="ECO:0000305" key="23">
    <source>
    </source>
</evidence>
<evidence type="ECO:0000305" key="24">
    <source>
    </source>
</evidence>
<evidence type="ECO:0007744" key="25">
    <source>
        <dbReference type="PDB" id="5YLU"/>
    </source>
</evidence>
<evidence type="ECO:0007744" key="26">
    <source>
        <dbReference type="PDB" id="6JXH"/>
    </source>
</evidence>
<evidence type="ECO:0007829" key="27">
    <source>
        <dbReference type="PDB" id="1IWC"/>
    </source>
</evidence>
<evidence type="ECO:0007829" key="28">
    <source>
        <dbReference type="PDB" id="6JXH"/>
    </source>
</evidence>
<evidence type="ECO:0007829" key="29">
    <source>
        <dbReference type="PDB" id="7EFL"/>
    </source>
</evidence>
<evidence type="ECO:0007829" key="30">
    <source>
        <dbReference type="PDB" id="7EFN"/>
    </source>
</evidence>
<evidence type="ECO:0007829" key="31">
    <source>
        <dbReference type="PDB" id="7ET1"/>
    </source>
</evidence>
<evidence type="ECO:0007829" key="32">
    <source>
        <dbReference type="PDB" id="7W49"/>
    </source>
</evidence>
<evidence type="ECO:0007829" key="33">
    <source>
        <dbReference type="PDB" id="7W4A"/>
    </source>
</evidence>
<evidence type="ECO:0007829" key="34">
    <source>
        <dbReference type="PDB" id="8IJV"/>
    </source>
</evidence>
<evidence type="ECO:0007829" key="35">
    <source>
        <dbReference type="PDB" id="8IJW"/>
    </source>
</evidence>
<evidence type="ECO:0007829" key="36">
    <source>
        <dbReference type="PDB" id="8IJX"/>
    </source>
</evidence>
<feature type="initiator methionine" description="Removed" evidence="14 17">
    <location>
        <position position="1"/>
    </location>
</feature>
<feature type="chain" id="PRO_0000046255" description="Potassium-transporting ATPase alpha chain 1">
    <location>
        <begin position="2"/>
        <end position="1034"/>
    </location>
</feature>
<feature type="topological domain" description="Cytoplasmic" evidence="7">
    <location>
        <begin position="2"/>
        <end position="97"/>
    </location>
</feature>
<feature type="transmembrane region" description="Helical" evidence="7">
    <location>
        <begin position="98"/>
        <end position="118"/>
    </location>
</feature>
<feature type="topological domain" description="Lumenal" evidence="7">
    <location>
        <begin position="119"/>
        <end position="141"/>
    </location>
</feature>
<feature type="transmembrane region" description="Helical" evidence="7">
    <location>
        <begin position="142"/>
        <end position="162"/>
    </location>
</feature>
<feature type="topological domain" description="Cytoplasmic" evidence="7">
    <location>
        <begin position="163"/>
        <end position="298"/>
    </location>
</feature>
<feature type="transmembrane region" description="Helical" evidence="7">
    <location>
        <begin position="299"/>
        <end position="318"/>
    </location>
</feature>
<feature type="topological domain" description="Lumenal" evidence="7">
    <location>
        <begin position="319"/>
        <end position="330"/>
    </location>
</feature>
<feature type="transmembrane region" description="Helical" evidence="7">
    <location>
        <begin position="331"/>
        <end position="348"/>
    </location>
</feature>
<feature type="topological domain" description="Cytoplasmic" evidence="7">
    <location>
        <begin position="349"/>
        <end position="782"/>
    </location>
</feature>
<feature type="transmembrane region" description="Helical" evidence="7">
    <location>
        <begin position="783"/>
        <end position="802"/>
    </location>
</feature>
<feature type="topological domain" description="Lumenal" evidence="7">
    <location>
        <begin position="803"/>
        <end position="812"/>
    </location>
</feature>
<feature type="transmembrane region" description="Helical" evidence="7">
    <location>
        <begin position="813"/>
        <end position="833"/>
    </location>
</feature>
<feature type="topological domain" description="Cytoplasmic" evidence="7">
    <location>
        <begin position="834"/>
        <end position="853"/>
    </location>
</feature>
<feature type="transmembrane region" description="Helical" evidence="7">
    <location>
        <begin position="854"/>
        <end position="876"/>
    </location>
</feature>
<feature type="topological domain" description="Lumenal" evidence="7">
    <location>
        <begin position="877"/>
        <end position="928"/>
    </location>
</feature>
<feature type="transmembrane region" description="Helical" evidence="7">
    <location>
        <begin position="929"/>
        <end position="948"/>
    </location>
</feature>
<feature type="topological domain" description="Cytoplasmic" evidence="7">
    <location>
        <begin position="949"/>
        <end position="962"/>
    </location>
</feature>
<feature type="transmembrane region" description="Helical" evidence="7">
    <location>
        <begin position="963"/>
        <end position="981"/>
    </location>
</feature>
<feature type="topological domain" description="Lumenal" evidence="7">
    <location>
        <begin position="982"/>
        <end position="996"/>
    </location>
</feature>
<feature type="transmembrane region" description="Helical" evidence="7">
    <location>
        <begin position="997"/>
        <end position="1017"/>
    </location>
</feature>
<feature type="topological domain" description="Cytoplasmic" evidence="7">
    <location>
        <begin position="1018"/>
        <end position="1034"/>
    </location>
</feature>
<feature type="region of interest" description="Disordered" evidence="8">
    <location>
        <begin position="13"/>
        <end position="40"/>
    </location>
</feature>
<feature type="region of interest" description="Disordered" evidence="8">
    <location>
        <begin position="222"/>
        <end position="244"/>
    </location>
</feature>
<feature type="compositionally biased region" description="Basic residues" evidence="8">
    <location>
        <begin position="26"/>
        <end position="39"/>
    </location>
</feature>
<feature type="compositionally biased region" description="Polar residues" evidence="8">
    <location>
        <begin position="225"/>
        <end position="239"/>
    </location>
</feature>
<feature type="active site" description="4-aspartylphosphate intermediate" evidence="9">
    <location>
        <position position="386"/>
    </location>
</feature>
<feature type="binding site" evidence="15 26">
    <location>
        <position position="339"/>
    </location>
    <ligand>
        <name>K(+)</name>
        <dbReference type="ChEBI" id="CHEBI:29103"/>
    </ligand>
</feature>
<feature type="binding site" evidence="15 26">
    <location>
        <position position="340"/>
    </location>
    <ligand>
        <name>K(+)</name>
        <dbReference type="ChEBI" id="CHEBI:29103"/>
    </ligand>
</feature>
<feature type="binding site" evidence="15 26">
    <location>
        <position position="342"/>
    </location>
    <ligand>
        <name>K(+)</name>
        <dbReference type="ChEBI" id="CHEBI:29103"/>
    </ligand>
</feature>
<feature type="binding site" evidence="15 26">
    <location>
        <position position="344"/>
    </location>
    <ligand>
        <name>K(+)</name>
        <dbReference type="ChEBI" id="CHEBI:29103"/>
    </ligand>
</feature>
<feature type="binding site" evidence="12 15 25 26">
    <location>
        <position position="386"/>
    </location>
    <ligand>
        <name>Mg(2+)</name>
        <dbReference type="ChEBI" id="CHEBI:18420"/>
    </ligand>
</feature>
<feature type="binding site" evidence="12 15 25 26">
    <location>
        <position position="388"/>
    </location>
    <ligand>
        <name>Mg(2+)</name>
        <dbReference type="ChEBI" id="CHEBI:18420"/>
    </ligand>
</feature>
<feature type="binding site" evidence="12 15 25 26">
    <location>
        <position position="727"/>
    </location>
    <ligand>
        <name>Mg(2+)</name>
        <dbReference type="ChEBI" id="CHEBI:18420"/>
    </ligand>
</feature>
<feature type="binding site" evidence="1">
    <location>
        <position position="731"/>
    </location>
    <ligand>
        <name>Mg(2+)</name>
        <dbReference type="ChEBI" id="CHEBI:18420"/>
    </ligand>
</feature>
<feature type="binding site" evidence="15 26">
    <location>
        <position position="796"/>
    </location>
    <ligand>
        <name>K(+)</name>
        <dbReference type="ChEBI" id="CHEBI:29103"/>
    </ligand>
</feature>
<feature type="binding site" evidence="15 26">
    <location>
        <position position="821"/>
    </location>
    <ligand>
        <name>K(+)</name>
        <dbReference type="ChEBI" id="CHEBI:29103"/>
    </ligand>
</feature>
<feature type="modified residue" description="Phosphotyrosine" evidence="16">
    <location>
        <position position="7"/>
    </location>
</feature>
<feature type="modified residue" description="Phosphotyrosine" evidence="16">
    <location>
        <position position="10"/>
    </location>
</feature>
<feature type="modified residue" description="Phosphoserine; by PKA and PKC" evidence="17">
    <location>
        <position position="27"/>
    </location>
</feature>
<feature type="modified residue" description="Phosphoserine" evidence="6">
    <location>
        <position position="462"/>
    </location>
</feature>
<feature type="modified residue" description="Phosphoserine" evidence="4">
    <location>
        <position position="600"/>
    </location>
</feature>
<feature type="modified residue" description="Phosphoserine" evidence="2">
    <location>
        <position position="839"/>
    </location>
</feature>
<feature type="modified residue" description="Phosphoserine; by PKA" evidence="1">
    <location>
        <position position="953"/>
    </location>
</feature>
<feature type="mutagenesis site" description="Has potassium-independent constitutive ATPase activity." evidence="12">
    <original>I</original>
    <variation>A</variation>
    <location>
        <position position="120"/>
    </location>
</feature>
<feature type="mutagenesis site" description="Has normal potassium-dependent ATPase activity." evidence="12">
    <original>I</original>
    <variation>M</variation>
    <location>
        <position position="120"/>
    </location>
</feature>
<feature type="mutagenesis site" description="Has potassium-independent constitutive ATPase activity." evidence="12">
    <original>M</original>
    <variation>A</variation>
    <location>
        <position position="335"/>
    </location>
</feature>
<feature type="mutagenesis site" description="Has normal potassium-dependent ATPase activity." evidence="12">
    <original>M</original>
    <variation>I</variation>
    <location>
        <position position="335"/>
    </location>
</feature>
<feature type="mutagenesis site" description="Loss of ATPase activity." evidence="12">
    <original>E</original>
    <variation>D</variation>
    <location>
        <position position="344"/>
    </location>
</feature>
<feature type="mutagenesis site" description="Reduces potassium-dependent ATPase activity." evidence="12 13">
    <original>E</original>
    <variation>Q</variation>
    <location>
        <position position="344"/>
    </location>
</feature>
<feature type="mutagenesis site" description="Reduces potassium-dependent ATPase activity." evidence="12">
    <original>E</original>
    <variation>D</variation>
    <location>
        <position position="796"/>
    </location>
</feature>
<feature type="mutagenesis site" description="Has normal potassium-dependent ATPase activity." evidence="12 13">
    <original>E</original>
    <variation>Q</variation>
    <location>
        <position position="796"/>
    </location>
</feature>
<feature type="mutagenesis site" description="Has constitutive ATPase activity that decreases in the presence of potassium ions. Has potassium-dependent ATPase activity; when associated with S-804. Has weak potassium-dependent ATPase activity; when associated with G-812." evidence="15">
    <original>Y</original>
    <variation>W</variation>
    <location>
        <position position="800"/>
    </location>
</feature>
<feature type="mutagenesis site" description="Has potassium-dependent ATPase activity; when associated with W-800." evidence="15">
    <original>I</original>
    <variation>S</variation>
    <location>
        <position position="804"/>
    </location>
</feature>
<feature type="mutagenesis site" description="Inactive due to impaired folding. Has weak potassium-dependent ATPase activity; when associated with W-800." evidence="15">
    <original>L</original>
    <variation>G</variation>
    <location>
        <position position="812"/>
    </location>
</feature>
<feature type="mutagenesis site" description="Has normal potassium-dependent ATPase activity." evidence="12">
    <original>E</original>
    <variation>D</variation>
    <location>
        <position position="821"/>
    </location>
</feature>
<feature type="mutagenesis site" description="Has potassium-independent constitutive ATPase activity." evidence="12 13">
    <original>E</original>
    <variation>Q</variation>
    <location>
        <position position="821"/>
    </location>
</feature>
<feature type="mutagenesis site" description="Reduces potassium-dependent ATPase activity." evidence="12">
    <original>D</original>
    <variation>E</variation>
    <location>
        <position position="825"/>
    </location>
</feature>
<feature type="mutagenesis site" description="Reduces potassium-dependent ATPase activity." evidence="12">
    <original>D</original>
    <variation>N</variation>
    <location>
        <position position="825"/>
    </location>
</feature>
<feature type="sequence conflict" description="In Ref. 2; AA sequence." evidence="20" ref="2">
    <original>G</original>
    <variation>Y</variation>
    <location>
        <position position="2"/>
    </location>
</feature>
<feature type="helix" evidence="27">
    <location>
        <begin position="5"/>
        <end position="14"/>
    </location>
</feature>
<feature type="strand" evidence="27">
    <location>
        <begin position="18"/>
        <end position="23"/>
    </location>
</feature>
<feature type="helix" evidence="27">
    <location>
        <begin position="24"/>
        <end position="29"/>
    </location>
</feature>
<feature type="turn" evidence="36">
    <location>
        <begin position="53"/>
        <end position="55"/>
    </location>
</feature>
<feature type="turn" evidence="36">
    <location>
        <begin position="58"/>
        <end position="60"/>
    </location>
</feature>
<feature type="strand" evidence="36">
    <location>
        <begin position="61"/>
        <end position="65"/>
    </location>
</feature>
<feature type="turn" evidence="36">
    <location>
        <begin position="69"/>
        <end position="71"/>
    </location>
</feature>
<feature type="helix" evidence="36">
    <location>
        <begin position="75"/>
        <end position="84"/>
    </location>
</feature>
<feature type="helix" evidence="36">
    <location>
        <begin position="98"/>
        <end position="105"/>
    </location>
</feature>
<feature type="helix" evidence="36">
    <location>
        <begin position="109"/>
        <end position="131"/>
    </location>
</feature>
<feature type="turn" evidence="29">
    <location>
        <begin position="134"/>
        <end position="136"/>
    </location>
</feature>
<feature type="helix" evidence="36">
    <location>
        <begin position="137"/>
        <end position="169"/>
    </location>
</feature>
<feature type="strand" evidence="30">
    <location>
        <begin position="170"/>
        <end position="172"/>
    </location>
</feature>
<feature type="strand" evidence="31">
    <location>
        <begin position="173"/>
        <end position="175"/>
    </location>
</feature>
<feature type="strand" evidence="36">
    <location>
        <begin position="178"/>
        <end position="183"/>
    </location>
</feature>
<feature type="strand" evidence="36">
    <location>
        <begin position="188"/>
        <end position="191"/>
    </location>
</feature>
<feature type="helix" evidence="36">
    <location>
        <begin position="192"/>
        <end position="194"/>
    </location>
</feature>
<feature type="strand" evidence="36">
    <location>
        <begin position="200"/>
        <end position="204"/>
    </location>
</feature>
<feature type="strand" evidence="36">
    <location>
        <begin position="211"/>
        <end position="224"/>
    </location>
</feature>
<feature type="turn" evidence="36">
    <location>
        <begin position="226"/>
        <end position="228"/>
    </location>
</feature>
<feature type="strand" evidence="36">
    <location>
        <begin position="235"/>
        <end position="237"/>
    </location>
</feature>
<feature type="strand" evidence="35">
    <location>
        <begin position="243"/>
        <end position="245"/>
    </location>
</feature>
<feature type="helix" evidence="36">
    <location>
        <begin position="246"/>
        <end position="248"/>
    </location>
</feature>
<feature type="strand" evidence="35">
    <location>
        <begin position="250"/>
        <end position="253"/>
    </location>
</feature>
<feature type="strand" evidence="36">
    <location>
        <begin position="258"/>
        <end position="270"/>
    </location>
</feature>
<feature type="helix" evidence="36">
    <location>
        <begin position="272"/>
        <end position="274"/>
    </location>
</feature>
<feature type="helix" evidence="36">
    <location>
        <begin position="276"/>
        <end position="285"/>
    </location>
</feature>
<feature type="helix" evidence="36">
    <location>
        <begin position="293"/>
        <end position="322"/>
    </location>
</feature>
<feature type="helix" evidence="36">
    <location>
        <begin position="327"/>
        <end position="340"/>
    </location>
</feature>
<feature type="helix" evidence="36">
    <location>
        <begin position="346"/>
        <end position="363"/>
    </location>
</feature>
<feature type="strand" evidence="36">
    <location>
        <begin position="366"/>
        <end position="370"/>
    </location>
</feature>
<feature type="helix" evidence="36">
    <location>
        <begin position="371"/>
        <end position="374"/>
    </location>
</feature>
<feature type="helix" evidence="36">
    <location>
        <begin position="376"/>
        <end position="379"/>
    </location>
</feature>
<feature type="strand" evidence="36">
    <location>
        <begin position="382"/>
        <end position="385"/>
    </location>
</feature>
<feature type="helix" evidence="36">
    <location>
        <begin position="387"/>
        <end position="391"/>
    </location>
</feature>
<feature type="strand" evidence="36">
    <location>
        <begin position="397"/>
        <end position="403"/>
    </location>
</feature>
<feature type="strand" evidence="36">
    <location>
        <begin position="406"/>
        <end position="409"/>
    </location>
</feature>
<feature type="strand" evidence="32">
    <location>
        <begin position="414"/>
        <end position="416"/>
    </location>
</feature>
<feature type="helix" evidence="36">
    <location>
        <begin position="426"/>
        <end position="437"/>
    </location>
</feature>
<feature type="strand" evidence="36">
    <location>
        <begin position="448"/>
        <end position="450"/>
    </location>
</feature>
<feature type="helix" evidence="36">
    <location>
        <begin position="452"/>
        <end position="454"/>
    </location>
</feature>
<feature type="strand" evidence="36">
    <location>
        <begin position="457"/>
        <end position="459"/>
    </location>
</feature>
<feature type="helix" evidence="36">
    <location>
        <begin position="461"/>
        <end position="473"/>
    </location>
</feature>
<feature type="helix" evidence="36">
    <location>
        <begin position="477"/>
        <end position="482"/>
    </location>
</feature>
<feature type="strand" evidence="36">
    <location>
        <begin position="486"/>
        <end position="490"/>
    </location>
</feature>
<feature type="turn" evidence="36">
    <location>
        <begin position="494"/>
        <end position="496"/>
    </location>
</feature>
<feature type="strand" evidence="36">
    <location>
        <begin position="498"/>
        <end position="504"/>
    </location>
</feature>
<feature type="strand" evidence="28">
    <location>
        <begin position="506"/>
        <end position="509"/>
    </location>
</feature>
<feature type="strand" evidence="36">
    <location>
        <begin position="513"/>
        <end position="519"/>
    </location>
</feature>
<feature type="helix" evidence="36">
    <location>
        <begin position="521"/>
        <end position="525"/>
    </location>
</feature>
<feature type="strand" evidence="36">
    <location>
        <begin position="529"/>
        <end position="533"/>
    </location>
</feature>
<feature type="strand" evidence="36">
    <location>
        <begin position="536"/>
        <end position="539"/>
    </location>
</feature>
<feature type="helix" evidence="36">
    <location>
        <begin position="544"/>
        <end position="557"/>
    </location>
</feature>
<feature type="strand" evidence="36">
    <location>
        <begin position="561"/>
        <end position="569"/>
    </location>
</feature>
<feature type="turn" evidence="36">
    <location>
        <begin position="572"/>
        <end position="574"/>
    </location>
</feature>
<feature type="strand" evidence="33">
    <location>
        <begin position="577"/>
        <end position="579"/>
    </location>
</feature>
<feature type="turn" evidence="36">
    <location>
        <begin position="583"/>
        <end position="585"/>
    </location>
</feature>
<feature type="strand" evidence="36">
    <location>
        <begin position="594"/>
        <end position="602"/>
    </location>
</feature>
<feature type="helix" evidence="36">
    <location>
        <begin position="609"/>
        <end position="618"/>
    </location>
</feature>
<feature type="strand" evidence="36">
    <location>
        <begin position="622"/>
        <end position="626"/>
    </location>
</feature>
<feature type="helix" evidence="36">
    <location>
        <begin position="631"/>
        <end position="640"/>
    </location>
</feature>
<feature type="strand" evidence="31">
    <location>
        <begin position="642"/>
        <end position="644"/>
    </location>
</feature>
<feature type="helix" evidence="36">
    <location>
        <begin position="651"/>
        <end position="658"/>
    </location>
</feature>
<feature type="helix" evidence="36">
    <location>
        <begin position="662"/>
        <end position="664"/>
    </location>
</feature>
<feature type="helix" evidence="36">
    <location>
        <begin position="667"/>
        <end position="669"/>
    </location>
</feature>
<feature type="strand" evidence="36">
    <location>
        <begin position="672"/>
        <end position="676"/>
    </location>
</feature>
<feature type="helix" evidence="36">
    <location>
        <begin position="677"/>
        <end position="681"/>
    </location>
</feature>
<feature type="helix" evidence="36">
    <location>
        <begin position="685"/>
        <end position="694"/>
    </location>
</feature>
<feature type="strand" evidence="36">
    <location>
        <begin position="696"/>
        <end position="702"/>
    </location>
</feature>
<feature type="helix" evidence="36">
    <location>
        <begin position="705"/>
        <end position="717"/>
    </location>
</feature>
<feature type="strand" evidence="36">
    <location>
        <begin position="722"/>
        <end position="726"/>
    </location>
</feature>
<feature type="helix" evidence="36">
    <location>
        <begin position="729"/>
        <end position="731"/>
    </location>
</feature>
<feature type="helix" evidence="36">
    <location>
        <begin position="732"/>
        <end position="737"/>
    </location>
</feature>
<feature type="strand" evidence="36">
    <location>
        <begin position="738"/>
        <end position="747"/>
    </location>
</feature>
<feature type="helix" evidence="36">
    <location>
        <begin position="750"/>
        <end position="755"/>
    </location>
</feature>
<feature type="strand" evidence="36">
    <location>
        <begin position="757"/>
        <end position="760"/>
    </location>
</feature>
<feature type="helix" evidence="36">
    <location>
        <begin position="767"/>
        <end position="791"/>
    </location>
</feature>
<feature type="helix" evidence="36">
    <location>
        <begin position="793"/>
        <end position="805"/>
    </location>
</feature>
<feature type="helix" evidence="36">
    <location>
        <begin position="814"/>
        <end position="822"/>
    </location>
</feature>
<feature type="turn" evidence="28">
    <location>
        <begin position="823"/>
        <end position="825"/>
    </location>
</feature>
<feature type="helix" evidence="36">
    <location>
        <begin position="826"/>
        <end position="831"/>
    </location>
</feature>
<feature type="helix" evidence="36">
    <location>
        <begin position="832"/>
        <end position="834"/>
    </location>
</feature>
<feature type="helix" evidence="36">
    <location>
        <begin position="841"/>
        <end position="843"/>
    </location>
</feature>
<feature type="turn" evidence="36">
    <location>
        <begin position="849"/>
        <end position="851"/>
    </location>
</feature>
<feature type="helix" evidence="36">
    <location>
        <begin position="857"/>
        <end position="865"/>
    </location>
</feature>
<feature type="helix" evidence="36">
    <location>
        <begin position="867"/>
        <end position="885"/>
    </location>
</feature>
<feature type="helix" evidence="36">
    <location>
        <begin position="890"/>
        <end position="893"/>
    </location>
</feature>
<feature type="turn" evidence="29">
    <location>
        <begin position="894"/>
        <end position="896"/>
    </location>
</feature>
<feature type="helix" evidence="36">
    <location>
        <begin position="897"/>
        <end position="901"/>
    </location>
</feature>
<feature type="strand" evidence="34">
    <location>
        <begin position="906"/>
        <end position="909"/>
    </location>
</feature>
<feature type="helix" evidence="36">
    <location>
        <begin position="918"/>
        <end position="946"/>
    </location>
</feature>
<feature type="strand" evidence="36">
    <location>
        <begin position="950"/>
        <end position="952"/>
    </location>
</feature>
<feature type="helix" evidence="36">
    <location>
        <begin position="954"/>
        <end position="957"/>
    </location>
</feature>
<feature type="strand" evidence="36">
    <location>
        <begin position="959"/>
        <end position="961"/>
    </location>
</feature>
<feature type="helix" evidence="36">
    <location>
        <begin position="963"/>
        <end position="981"/>
    </location>
</feature>
<feature type="helix" evidence="36">
    <location>
        <begin position="985"/>
        <end position="988"/>
    </location>
</feature>
<feature type="helix" evidence="36">
    <location>
        <begin position="997"/>
        <end position="1000"/>
    </location>
</feature>
<feature type="helix" evidence="36">
    <location>
        <begin position="1003"/>
        <end position="1022"/>
    </location>
</feature>
<feature type="strand" evidence="28">
    <location>
        <begin position="1024"/>
        <end position="1026"/>
    </location>
</feature>
<feature type="helix" evidence="36">
    <location>
        <begin position="1027"/>
        <end position="1032"/>
    </location>
</feature>
<accession>P19156</accession>
<comment type="function">
    <text evidence="2 5 10 12 13 15">The catalytic subunit of the gastric H(+)/K(+) ATPase pump which transports H(+) ions in exchange for K(+) ions across the apical membrane of parietal cells. Uses ATP as an energy source to pump H(+) ions to the gastric lumen while transporting K(+) ion from the lumen into the cell (By similarity). Remarkably generates a million-fold proton gradient across the gastric parietal cell membrane, acidifying the gastric juice down to pH 1 (By similarity). Within a transport cycle, the transfer of a H(+) ion across the membrane is coupled to ATP hydrolysis and is associated with a transient phosphorylation that shifts the pump conformation from inward-facing (E1) to outward-facing state (E2). The release of the H(+) ion in the stomach lumen is followed by binding of K(+) ion converting the pump conformation back to the E1 state (PubMed:19387495, PubMed:29618813, PubMed:30143663, PubMed:31436534).</text>
</comment>
<comment type="catalytic activity">
    <reaction evidence="2 21 22 23 24">
        <text>K(+)(out) + ATP + H2O + H(+)(in) = K(+)(in) + ADP + phosphate + 2 H(+)(out)</text>
        <dbReference type="Rhea" id="RHEA:22044"/>
        <dbReference type="ChEBI" id="CHEBI:15377"/>
        <dbReference type="ChEBI" id="CHEBI:15378"/>
        <dbReference type="ChEBI" id="CHEBI:29103"/>
        <dbReference type="ChEBI" id="CHEBI:30616"/>
        <dbReference type="ChEBI" id="CHEBI:43474"/>
        <dbReference type="ChEBI" id="CHEBI:456216"/>
        <dbReference type="EC" id="7.2.2.19"/>
    </reaction>
    <physiologicalReaction direction="left-to-right" evidence="2">
        <dbReference type="Rhea" id="RHEA:22045"/>
    </physiologicalReaction>
</comment>
<comment type="activity regulation">
    <text evidence="12">Down-regulated by K(+)-competitive acid blockers (P-CABs) such as vonoprazan.</text>
</comment>
<comment type="biophysicochemical properties">
    <kinetics>
        <KM evidence="12">1.2 mM for ATP (ATPase activity)</KM>
        <Vmax evidence="12">4.3 umol/h/mg enzyme toward ATP (ATPase activity)</Vmax>
    </kinetics>
</comment>
<comment type="subunit">
    <text evidence="10 11 12">The gastric H(+)/K(+) ATPase pump is composed of the catalytic alpha subunit ATP4A and the regulatory beta subunit ATP4B (PubMed:19387495, PubMed:21224846, PubMed:29618813). Interacts (via the P-domain) with ATP4B (via N-terminus); this interaction stabilizes the lumenal-open E2 conformation state and prevents the reverse reaction of the transport cycle (PubMed:19387495).</text>
</comment>
<comment type="interaction">
    <interactant intactId="EBI-8803609">
        <id>P19156</id>
    </interactant>
    <interactant intactId="EBI-9009115">
        <id>P18434</id>
        <label>ATP4B</label>
    </interactant>
    <organismsDiffer>false</organismsDiffer>
    <experiments>2</experiments>
</comment>
<comment type="subcellular location">
    <subcellularLocation>
        <location evidence="3">Apical cell membrane</location>
        <topology evidence="7">Multi-pass membrane protein</topology>
    </subcellularLocation>
    <subcellularLocation>
        <location evidence="11">Cell membrane</location>
        <topology>Multi-pass membrane protein</topology>
    </subcellularLocation>
    <text evidence="3">Localized in the apical canalicular membrane of parietal cells.</text>
</comment>
<comment type="similarity">
    <text evidence="20">Belongs to the cation transport ATPase (P-type) (TC 3.A.3) family. Type IIC subfamily.</text>
</comment>
<protein>
    <recommendedName>
        <fullName>Potassium-transporting ATPase alpha chain 1</fullName>
        <ecNumber evidence="2">7.2.2.19</ecNumber>
    </recommendedName>
    <alternativeName>
        <fullName evidence="19">Gastric H(+)/K(+) ATPase subunit alpha</fullName>
    </alternativeName>
    <alternativeName>
        <fullName evidence="18">Proton pump</fullName>
    </alternativeName>
</protein>
<reference key="1">
    <citation type="journal article" date="1988" name="Biochem. Biophys. Res. Commun.">
        <title>cDNA cloning and sequence determination of pig gastric (H+ + K+)-ATPase.</title>
        <authorList>
            <person name="Maeda M."/>
            <person name="Ishizaki J."/>
            <person name="Futai M."/>
        </authorList>
    </citation>
    <scope>NUCLEOTIDE SEQUENCE [MRNA]</scope>
</reference>
<reference key="2">
    <citation type="journal article" date="1986" name="Biochem. Biophys. Res. Commun.">
        <title>Structural studies on H+,K+-ATPase: determination of the NH2-terminal amino acid sequence and immunological cross-reactivity with Na+,K+-ATPase.</title>
        <authorList>
            <person name="Lane L.K."/>
            <person name="Kirley T.L."/>
            <person name="Ball W.J. Jr."/>
        </authorList>
    </citation>
    <scope>PROTEIN SEQUENCE OF 2-18</scope>
</reference>
<reference key="3">
    <citation type="journal article" date="1991" name="Biochem. J.">
        <title>Determination of the epitope for the inhibitory monoclonal antibody 5-B6 on the catalytic subunit of gastric Mg(2+)-dependent H(+)-transporting and K(+)-stimulated ATPase.</title>
        <authorList>
            <person name="Van Uem T.J."/>
            <person name="Swarts H.G."/>
            <person name="De Pont J.J."/>
        </authorList>
    </citation>
    <scope>ACTIVE SITE ASP-386</scope>
</reference>
<reference key="4">
    <citation type="journal article" date="1995" name="J. Biol. Chem.">
        <title>Reversible phosphorylation of both Tyr7 and Tyr10 in the alpha-chain of pig stomach H+,K(+)-ATPase by a membrane-bound kinase and a phosphatase.</title>
        <authorList>
            <person name="Togawa K."/>
            <person name="Ishiguro T."/>
            <person name="Kaya S."/>
            <person name="Shimada A."/>
            <person name="Imagawa T."/>
            <person name="Taniguchi K."/>
        </authorList>
    </citation>
    <scope>PHOSPHORYLATION AT TYR-7 AND TYR-10</scope>
</reference>
<reference key="5">
    <citation type="journal article" date="1996" name="Biochem. Biophys. Res. Commun.">
        <title>Ser-27, Tyr-10 and Tyr-7 in the alpha-chain of pig stomach H+,K(+)-ATPase as Ca(2+)-dependent phosphorylatable sites by intrinsic and extrinsic protein kinases.</title>
        <authorList>
            <person name="Togawa K."/>
            <person name="Kaya S."/>
            <person name="Shimada A."/>
            <person name="Imagawa T."/>
            <person name="Maardh S."/>
            <person name="Corbin J."/>
            <person name="Kikkawa U."/>
            <person name="Taniguchi K."/>
        </authorList>
    </citation>
    <scope>PROTEIN SEQUENCE OF 2-11</scope>
    <scope>PHOSPHORYLATION AT SER-27</scope>
</reference>
<reference key="6">
    <citation type="journal article" date="2018" name="Sci. Rep.">
        <title>K+ binding and proton redistribution in the E2P state of the H+, K+-ATPase.</title>
        <authorList>
            <person name="Dubey V."/>
            <person name="Han M."/>
            <person name="Kopec W."/>
            <person name="Solov'yov I.A."/>
            <person name="Abe K."/>
            <person name="Khandelia H."/>
        </authorList>
    </citation>
    <scope>FUNCTION</scope>
    <scope>CATALYTIC ACTIVITY</scope>
    <scope>MUTAGENESIS OF GLU-344; GLU-796 AND GLU-821</scope>
</reference>
<reference key="7">
    <citation type="journal article" date="2009" name="EMBO J.">
        <title>Inter-subunit interaction of gastric H+,K+-ATPase prevents reverse reaction of the transport cycle.</title>
        <authorList>
            <person name="Abe K."/>
            <person name="Tani K."/>
            <person name="Nishizawa T."/>
            <person name="Fujiyoshi Y."/>
        </authorList>
    </citation>
    <scope>STRUCTURE BY ELECTRON MICROSCOPY (6.50 ANGSTROMS)</scope>
    <scope>FUNCTION</scope>
    <scope>CATALYTIC ACTIVITY</scope>
    <scope>INTERACTION WITH ATP4B</scope>
</reference>
<reference key="8">
    <citation type="journal article" date="2011" name="Nat. Commun.">
        <title>Conformational rearrangement of gastric H(+),K(+)-ATPase induced by an acid suppressant.</title>
        <authorList>
            <person name="Abe K."/>
            <person name="Tani K."/>
            <person name="Fujiyoshi Y."/>
        </authorList>
    </citation>
    <scope>STRUCTURE BY ELECTRON MICROSCOPY (7.0 ANGSTROMS) IN COMPLEX WITH ATP4B AND INHIBITOR</scope>
    <scope>SUBCELLULAR LOCATION</scope>
</reference>
<reference key="9">
    <citation type="journal article" date="2018" name="Nature">
        <title>Crystal structures of the gastric proton pump.</title>
        <authorList>
            <person name="Abe K."/>
            <person name="Irie K."/>
            <person name="Nakanishi H."/>
            <person name="Suzuki H."/>
            <person name="Fujiyoshi Y."/>
        </authorList>
    </citation>
    <scope>X-RAY CRYSTALLOGRAPHY (2.80 ANGSTROMS) IN COMPLEX WITH ATP4B; MAGNESIUM AND INHIBITOR</scope>
    <scope>FUNCTION</scope>
    <scope>CATALYTIC ACTIVITY</scope>
    <scope>BIOPHYSICOCHEMICAL PROPERTIES</scope>
    <scope>ACTIVITY REGULATION</scope>
    <scope>MUTAGENESIS OF ILE-120; MET-335; GLU-344; GLU-796; GLU-821 AND ASP-825</scope>
</reference>
<reference key="10">
    <citation type="journal article" date="2019" name="Elife">
        <title>A single K(+)-binding site in the crystal structure of the gastric proton pump.</title>
        <authorList>
            <person name="Yamamoto K."/>
            <person name="Dubey V."/>
            <person name="Irie K."/>
            <person name="Nakanishi H."/>
            <person name="Khandelia H."/>
            <person name="Fujiyoshi Y."/>
            <person name="Abe K."/>
        </authorList>
    </citation>
    <scope>X-RAY CRYSTALLOGRAPHY (2.50 ANGSTROMS) OF 49-1034 IN COMPLEX WITH POTASSIUM AND MAGNESIUM IONS</scope>
    <scope>FUNCTION</scope>
    <scope>CATALYTIC ACTIVITY</scope>
    <scope>MUTAGENESIS OF TYR-800; ILE-804 AND LEU-812</scope>
</reference>
<keyword id="KW-0002">3D-structure</keyword>
<keyword id="KW-0067">ATP-binding</keyword>
<keyword id="KW-1003">Cell membrane</keyword>
<keyword id="KW-0903">Direct protein sequencing</keyword>
<keyword id="KW-0375">Hydrogen ion transport</keyword>
<keyword id="KW-0406">Ion transport</keyword>
<keyword id="KW-0460">Magnesium</keyword>
<keyword id="KW-0472">Membrane</keyword>
<keyword id="KW-0479">Metal-binding</keyword>
<keyword id="KW-0547">Nucleotide-binding</keyword>
<keyword id="KW-0597">Phosphoprotein</keyword>
<keyword id="KW-0630">Potassium</keyword>
<keyword id="KW-0633">Potassium transport</keyword>
<keyword id="KW-1185">Reference proteome</keyword>
<keyword id="KW-1278">Translocase</keyword>
<keyword id="KW-0812">Transmembrane</keyword>
<keyword id="KW-1133">Transmembrane helix</keyword>
<keyword id="KW-0813">Transport</keyword>
<proteinExistence type="evidence at protein level"/>
<sequence length="1034" mass="114287">MGKAENYELYQVELGPGPSGDMAAKMSKKKAGRGGGKRKEKLENMKKEMEINDHQLSVAELEQKYQTSATKGLSASLAAELLLRDGPNALRPPRGTPEYVKFARQLAGGLQCLMWVAAAICLIAFAIQASEGDLTTDDNLYLALALIAVVVVTGCFGYYQEFKSTNIIASFKNLVPQQATVIRDGDKFQINADQLVVGDLVEMKGGDRVPADIRILQAQGRKVDNSSLTGESEPQTRSPECTHESPLETRNIAFFSTMCLEGTAQGLVVNTGDRTIIGRIASLASGVENEKTPIAIEIEHFVDIIAGLAILFGATFFIVAMCIGYTFLRAMVFFMAIVVAYVPEGLLATVTVCLSLTAKRLASKNCVVKNLEAVETLGSTSVICSDKTGTLTQNRMTVSHLWFDNHIHSADTTEDQSGQTFDQSSETWRALCRVLTLCNRAAFKSGQDAVPVPKRIVIGDASETALLKFSELTLGNAMGYRERFPKVCEIPFNSTNKFQLSIHTLEDPRDPRHVLVMKGAPERVLERCSSILIKGQELPLDEQWREAFQTAYLSLGGLGERVLGFCQLYLSEKDYPPGYAFDVEAMNFPTSGLSFAGLVSMIDPPRATVPDAVLKCRTAGIRVIMVTGDHPITAKAIAASVGIISEGSETVEDIAARLRVPVDQVNRKDARACVINGMQLKDMDPSELVEALRTHPEMVFARTSPQQKLVIVESCQRLGAIVAVTGDGVNDSPALKKADIGVAMGIAGSDAAKNAADMILLDDNFASIVTGVEQGRLIFDNLKKSIAYTLTKNIPELTPYLIYITVSVPLPLGCITILFIELCTDIFPSVSLAYEKAESDIMHLRPRNPKRDRLVNEPLAAYSYFQIGAIQSFAGFTDYFTAMAQEGWFPLLCVGLRPQWENHHLQDLQDSYGQEWTFGQRLYQQYTCYTVFFISIEMCQIADVLIRKTRRLSAFQQGFFRNRILVIAIVFQVCIGCFLCYCPGMPNIFNFMPIRFQWWLVPMPFGLLIFVYDEIRKLGVRCCPGSWWDQELYY</sequence>